<reference key="1">
    <citation type="journal article" date="2003" name="Biochem. J.">
        <title>Cloning of an emopamil-binding protein (EBP)-like protein that lacks sterol delta8-delta7 isomerase activity.</title>
        <authorList>
            <person name="Moebius F.F."/>
            <person name="Fitzky B.U."/>
            <person name="Wietzorrek G."/>
            <person name="Haidekker A."/>
            <person name="Eder A."/>
            <person name="Glossmann H."/>
        </authorList>
    </citation>
    <scope>NUCLEOTIDE SEQUENCE [MRNA] (ISOFORM 1)</scope>
    <scope>FUNCTION</scope>
    <scope>SUBUNIT</scope>
    <scope>SUBCELLULAR LOCATION</scope>
    <scope>TISSUE SPECIFICITY</scope>
    <source>
        <tissue>Liver</tissue>
    </source>
</reference>
<reference key="2">
    <citation type="journal article" date="2004" name="Nature">
        <title>The DNA sequence and analysis of human chromosome 13.</title>
        <authorList>
            <person name="Dunham A."/>
            <person name="Matthews L.H."/>
            <person name="Burton J."/>
            <person name="Ashurst J.L."/>
            <person name="Howe K.L."/>
            <person name="Ashcroft K.J."/>
            <person name="Beare D.M."/>
            <person name="Burford D.C."/>
            <person name="Hunt S.E."/>
            <person name="Griffiths-Jones S."/>
            <person name="Jones M.C."/>
            <person name="Keenan S.J."/>
            <person name="Oliver K."/>
            <person name="Scott C.E."/>
            <person name="Ainscough R."/>
            <person name="Almeida J.P."/>
            <person name="Ambrose K.D."/>
            <person name="Andrews D.T."/>
            <person name="Ashwell R.I.S."/>
            <person name="Babbage A.K."/>
            <person name="Bagguley C.L."/>
            <person name="Bailey J."/>
            <person name="Bannerjee R."/>
            <person name="Barlow K.F."/>
            <person name="Bates K."/>
            <person name="Beasley H."/>
            <person name="Bird C.P."/>
            <person name="Bray-Allen S."/>
            <person name="Brown A.J."/>
            <person name="Brown J.Y."/>
            <person name="Burrill W."/>
            <person name="Carder C."/>
            <person name="Carter N.P."/>
            <person name="Chapman J.C."/>
            <person name="Clamp M.E."/>
            <person name="Clark S.Y."/>
            <person name="Clarke G."/>
            <person name="Clee C.M."/>
            <person name="Clegg S.C."/>
            <person name="Cobley V."/>
            <person name="Collins J.E."/>
            <person name="Corby N."/>
            <person name="Coville G.J."/>
            <person name="Deloukas P."/>
            <person name="Dhami P."/>
            <person name="Dunham I."/>
            <person name="Dunn M."/>
            <person name="Earthrowl M.E."/>
            <person name="Ellington A.G."/>
            <person name="Faulkner L."/>
            <person name="Frankish A.G."/>
            <person name="Frankland J."/>
            <person name="French L."/>
            <person name="Garner P."/>
            <person name="Garnett J."/>
            <person name="Gilbert J.G.R."/>
            <person name="Gilson C.J."/>
            <person name="Ghori J."/>
            <person name="Grafham D.V."/>
            <person name="Gribble S.M."/>
            <person name="Griffiths C."/>
            <person name="Hall R.E."/>
            <person name="Hammond S."/>
            <person name="Harley J.L."/>
            <person name="Hart E.A."/>
            <person name="Heath P.D."/>
            <person name="Howden P.J."/>
            <person name="Huckle E.J."/>
            <person name="Hunt P.J."/>
            <person name="Hunt A.R."/>
            <person name="Johnson C."/>
            <person name="Johnson D."/>
            <person name="Kay M."/>
            <person name="Kimberley A.M."/>
            <person name="King A."/>
            <person name="Laird G.K."/>
            <person name="Langford C.J."/>
            <person name="Lawlor S."/>
            <person name="Leongamornlert D.A."/>
            <person name="Lloyd D.M."/>
            <person name="Lloyd C."/>
            <person name="Loveland J.E."/>
            <person name="Lovell J."/>
            <person name="Martin S."/>
            <person name="Mashreghi-Mohammadi M."/>
            <person name="McLaren S.J."/>
            <person name="McMurray A."/>
            <person name="Milne S."/>
            <person name="Moore M.J.F."/>
            <person name="Nickerson T."/>
            <person name="Palmer S.A."/>
            <person name="Pearce A.V."/>
            <person name="Peck A.I."/>
            <person name="Pelan S."/>
            <person name="Phillimore B."/>
            <person name="Porter K.M."/>
            <person name="Rice C.M."/>
            <person name="Searle S."/>
            <person name="Sehra H.K."/>
            <person name="Shownkeen R."/>
            <person name="Skuce C.D."/>
            <person name="Smith M."/>
            <person name="Steward C.A."/>
            <person name="Sycamore N."/>
            <person name="Tester J."/>
            <person name="Thomas D.W."/>
            <person name="Tracey A."/>
            <person name="Tromans A."/>
            <person name="Tubby B."/>
            <person name="Wall M."/>
            <person name="Wallis J.M."/>
            <person name="West A.P."/>
            <person name="Whitehead S.L."/>
            <person name="Willey D.L."/>
            <person name="Wilming L."/>
            <person name="Wray P.W."/>
            <person name="Wright M.W."/>
            <person name="Young L."/>
            <person name="Coulson A."/>
            <person name="Durbin R.M."/>
            <person name="Hubbard T."/>
            <person name="Sulston J.E."/>
            <person name="Beck S."/>
            <person name="Bentley D.R."/>
            <person name="Rogers J."/>
            <person name="Ross M.T."/>
        </authorList>
    </citation>
    <scope>NUCLEOTIDE SEQUENCE [LARGE SCALE GENOMIC DNA]</scope>
</reference>
<reference key="3">
    <citation type="submission" date="2005-07" db="EMBL/GenBank/DDBJ databases">
        <authorList>
            <person name="Mural R.J."/>
            <person name="Istrail S."/>
            <person name="Sutton G.G."/>
            <person name="Florea L."/>
            <person name="Halpern A.L."/>
            <person name="Mobarry C.M."/>
            <person name="Lippert R."/>
            <person name="Walenz B."/>
            <person name="Shatkay H."/>
            <person name="Dew I."/>
            <person name="Miller J.R."/>
            <person name="Flanigan M.J."/>
            <person name="Edwards N.J."/>
            <person name="Bolanos R."/>
            <person name="Fasulo D."/>
            <person name="Halldorsson B.V."/>
            <person name="Hannenhalli S."/>
            <person name="Turner R."/>
            <person name="Yooseph S."/>
            <person name="Lu F."/>
            <person name="Nusskern D.R."/>
            <person name="Shue B.C."/>
            <person name="Zheng X.H."/>
            <person name="Zhong F."/>
            <person name="Delcher A.L."/>
            <person name="Huson D.H."/>
            <person name="Kravitz S.A."/>
            <person name="Mouchard L."/>
            <person name="Reinert K."/>
            <person name="Remington K.A."/>
            <person name="Clark A.G."/>
            <person name="Waterman M.S."/>
            <person name="Eichler E.E."/>
            <person name="Adams M.D."/>
            <person name="Hunkapiller M.W."/>
            <person name="Myers E.W."/>
            <person name="Venter J.C."/>
        </authorList>
    </citation>
    <scope>NUCLEOTIDE SEQUENCE [LARGE SCALE GENOMIC DNA]</scope>
</reference>
<reference key="4">
    <citation type="journal article" date="2004" name="Genome Res.">
        <title>The status, quality, and expansion of the NIH full-length cDNA project: the Mammalian Gene Collection (MGC).</title>
        <authorList>
            <consortium name="The MGC Project Team"/>
        </authorList>
    </citation>
    <scope>NUCLEOTIDE SEQUENCE [LARGE SCALE MRNA] (ISOFORM 1)</scope>
    <source>
        <tissue>Brain</tissue>
        <tissue>Prostate</tissue>
    </source>
</reference>
<sequence>MGAEWELGAEAGGSLLLCAALLAAGCALGLRLGRGQGAADRGALIWLCYDALVHFALEGPFVYLSLVGNVANSDGLIASLWKEYGKADARWVYFDPTIVSVEILTVALDGSLALFLIYAIVKEKYYRHFLQITLCVCELYGCWMTFLPEWLTRSPNLNTSNWLYCWLYLFFFNGVWVLIPGLLLWQSWLELKKMHQKETSSVKKFQ</sequence>
<comment type="function">
    <text evidence="3">Does not possess sterol isomerase activity and does not bind sigma ligands.</text>
</comment>
<comment type="subunit">
    <text evidence="3">Homodimer.</text>
</comment>
<comment type="subcellular location">
    <subcellularLocation>
        <location evidence="3">Endoplasmic reticulum membrane</location>
        <topology evidence="3">Multi-pass membrane protein</topology>
    </subcellularLocation>
</comment>
<comment type="alternative products">
    <event type="alternative splicing"/>
    <isoform>
        <id>Q9BY08-1</id>
        <name>1</name>
        <sequence type="displayed"/>
    </isoform>
    <isoform>
        <id>Q9BY08-2</id>
        <name>2</name>
        <sequence type="described" ref="VSP_035418 VSP_035425"/>
    </isoform>
    <isoform>
        <id>Q9BY08-3</id>
        <name>3</name>
        <sequence type="described" ref="VSP_035417 VSP_035422"/>
    </isoform>
    <isoform>
        <id>Q9BY08-4</id>
        <name>4</name>
        <sequence type="described" ref="VSP_035419 VSP_035421"/>
    </isoform>
    <isoform>
        <id>Q9BY08-5</id>
        <name>5</name>
        <sequence type="described" ref="VSP_035420 VSP_035423 VSP_035424"/>
    </isoform>
</comment>
<comment type="tissue specificity">
    <text evidence="3">Widely expressed with highest levels in liver, lung and kidney.</text>
</comment>
<comment type="similarity">
    <text evidence="4">Belongs to the EBP family.</text>
</comment>
<evidence type="ECO:0000255" key="1"/>
<evidence type="ECO:0000255" key="2">
    <source>
        <dbReference type="PROSITE-ProRule" id="PRU01087"/>
    </source>
</evidence>
<evidence type="ECO:0000269" key="3">
    <source>
    </source>
</evidence>
<evidence type="ECO:0000305" key="4"/>
<protein>
    <recommendedName>
        <fullName>Emopamil-binding protein-like</fullName>
    </recommendedName>
    <alternativeName>
        <fullName>Emopamil-binding-related protein</fullName>
    </alternativeName>
</protein>
<organism>
    <name type="scientific">Homo sapiens</name>
    <name type="common">Human</name>
    <dbReference type="NCBI Taxonomy" id="9606"/>
    <lineage>
        <taxon>Eukaryota</taxon>
        <taxon>Metazoa</taxon>
        <taxon>Chordata</taxon>
        <taxon>Craniata</taxon>
        <taxon>Vertebrata</taxon>
        <taxon>Euteleostomi</taxon>
        <taxon>Mammalia</taxon>
        <taxon>Eutheria</taxon>
        <taxon>Euarchontoglires</taxon>
        <taxon>Primates</taxon>
        <taxon>Haplorrhini</taxon>
        <taxon>Catarrhini</taxon>
        <taxon>Hominidae</taxon>
        <taxon>Homo</taxon>
    </lineage>
</organism>
<feature type="chain" id="PRO_0000174347" description="Emopamil-binding protein-like">
    <location>
        <begin position="1"/>
        <end position="206"/>
    </location>
</feature>
<feature type="transmembrane region" description="Helical" evidence="1">
    <location>
        <begin position="10"/>
        <end position="30"/>
    </location>
</feature>
<feature type="transmembrane region" description="Helical" evidence="1">
    <location>
        <begin position="42"/>
        <end position="62"/>
    </location>
</feature>
<feature type="transmembrane region" description="Helical" evidence="1">
    <location>
        <begin position="101"/>
        <end position="121"/>
    </location>
</feature>
<feature type="transmembrane region" description="Helical" evidence="1">
    <location>
        <begin position="165"/>
        <end position="185"/>
    </location>
</feature>
<feature type="domain" description="EXPERA" evidence="2">
    <location>
        <begin position="39"/>
        <end position="184"/>
    </location>
</feature>
<feature type="splice variant" id="VSP_035417" description="In isoform 3." evidence="4">
    <original>EGPFVYLSLVGNVANSDGLIASLWKEYGKADARWVYFDPTIVSVE</original>
    <variation>AFPADHPVRVRAVWLLDDLPPRVAHQKPQPQHQQLAVLLALPVFF</variation>
    <location>
        <begin position="58"/>
        <end position="102"/>
    </location>
</feature>
<feature type="splice variant" id="VSP_035418" description="In isoform 2." evidence="4">
    <original>WKEYGKADARWVYFDPTIVSVEILTVALDGSLALFLIYAIVKEKYYRHFLQITLCVCELYGCWMTFLPEWLT</original>
    <variation>CESRSVPQAGAQWHHLGSLQAPPPRFTPFSCLSLPSSWDYRRPPPRLANFFVFLVETGFHHVSQDGLDLLTS</variation>
    <location>
        <begin position="81"/>
        <end position="152"/>
    </location>
</feature>
<feature type="splice variant" id="VSP_035419" description="In isoform 4." evidence="4">
    <original>WKEYGKADARWVYFDPT</original>
    <variation>CISCRSPCACASCMAAG</variation>
    <location>
        <begin position="81"/>
        <end position="97"/>
    </location>
</feature>
<feature type="splice variant" id="VSP_035420" description="In isoform 5." evidence="4">
    <original>WKEYGKA</original>
    <variation>S</variation>
    <location>
        <begin position="81"/>
        <end position="87"/>
    </location>
</feature>
<feature type="splice variant" id="VSP_035421" description="In isoform 4." evidence="4">
    <location>
        <begin position="98"/>
        <end position="206"/>
    </location>
</feature>
<feature type="splice variant" id="VSP_035422" description="In isoform 3." evidence="4">
    <location>
        <begin position="103"/>
        <end position="206"/>
    </location>
</feature>
<feature type="splice variant" id="VSP_035423" description="In isoform 5." evidence="4">
    <original>HFLQITL</original>
    <variation>DRVAWGE</variation>
    <location>
        <begin position="128"/>
        <end position="134"/>
    </location>
</feature>
<feature type="splice variant" id="VSP_035424" description="In isoform 5." evidence="4">
    <location>
        <begin position="135"/>
        <end position="206"/>
    </location>
</feature>
<feature type="splice variant" id="VSP_035425" description="In isoform 2." evidence="4">
    <location>
        <begin position="153"/>
        <end position="206"/>
    </location>
</feature>
<feature type="sequence conflict" description="In Ref. 4; AAH92471." evidence="4" ref="4">
    <original>R</original>
    <variation>H</variation>
    <location>
        <position position="31"/>
    </location>
</feature>
<name>EBPL_HUMAN</name>
<keyword id="KW-0025">Alternative splicing</keyword>
<keyword id="KW-0256">Endoplasmic reticulum</keyword>
<keyword id="KW-0472">Membrane</keyword>
<keyword id="KW-1267">Proteomics identification</keyword>
<keyword id="KW-1185">Reference proteome</keyword>
<keyword id="KW-0812">Transmembrane</keyword>
<keyword id="KW-1133">Transmembrane helix</keyword>
<gene>
    <name type="primary">EBPL</name>
    <name type="synonym">EBRP</name>
    <name type="synonym">ERP</name>
</gene>
<dbReference type="EMBL" id="AF243433">
    <property type="protein sequence ID" value="AAK28348.1"/>
    <property type="molecule type" value="mRNA"/>
</dbReference>
<dbReference type="EMBL" id="AL135901">
    <property type="status" value="NOT_ANNOTATED_CDS"/>
    <property type="molecule type" value="Genomic_DNA"/>
</dbReference>
<dbReference type="EMBL" id="CH471075">
    <property type="protein sequence ID" value="EAX08832.1"/>
    <property type="molecule type" value="Genomic_DNA"/>
</dbReference>
<dbReference type="EMBL" id="BC018478">
    <property type="protein sequence ID" value="AAH18478.1"/>
    <property type="molecule type" value="mRNA"/>
</dbReference>
<dbReference type="EMBL" id="BC092471">
    <property type="protein sequence ID" value="AAH92471.1"/>
    <property type="molecule type" value="mRNA"/>
</dbReference>
<dbReference type="CCDS" id="CCDS9420.1">
    <molecule id="Q9BY08-1"/>
</dbReference>
<dbReference type="RefSeq" id="NP_115954.1">
    <molecule id="Q9BY08-1"/>
    <property type="nucleotide sequence ID" value="NM_032565.5"/>
</dbReference>
<dbReference type="SMR" id="Q9BY08"/>
<dbReference type="BioGRID" id="124173">
    <property type="interactions" value="3"/>
</dbReference>
<dbReference type="FunCoup" id="Q9BY08">
    <property type="interactions" value="273"/>
</dbReference>
<dbReference type="IntAct" id="Q9BY08">
    <property type="interactions" value="3"/>
</dbReference>
<dbReference type="STRING" id="9606.ENSP00000242827"/>
<dbReference type="BindingDB" id="Q9BY08"/>
<dbReference type="ChEMBL" id="CHEMBL2311238"/>
<dbReference type="DrugCentral" id="Q9BY08"/>
<dbReference type="iPTMnet" id="Q9BY08"/>
<dbReference type="BioMuta" id="EBPL"/>
<dbReference type="DMDM" id="18202741"/>
<dbReference type="jPOST" id="Q9BY08"/>
<dbReference type="MassIVE" id="Q9BY08"/>
<dbReference type="PaxDb" id="9606-ENSP00000242827"/>
<dbReference type="PeptideAtlas" id="Q9BY08"/>
<dbReference type="ProteomicsDB" id="79554">
    <molecule id="Q9BY08-1"/>
</dbReference>
<dbReference type="ProteomicsDB" id="79555">
    <molecule id="Q9BY08-2"/>
</dbReference>
<dbReference type="ProteomicsDB" id="79556">
    <molecule id="Q9BY08-3"/>
</dbReference>
<dbReference type="ProteomicsDB" id="79557">
    <molecule id="Q9BY08-4"/>
</dbReference>
<dbReference type="ProteomicsDB" id="79558">
    <molecule id="Q9BY08-5"/>
</dbReference>
<dbReference type="TopDownProteomics" id="Q9BY08-1">
    <molecule id="Q9BY08-1"/>
</dbReference>
<dbReference type="Antibodypedia" id="53037">
    <property type="antibodies" value="60 antibodies from 12 providers"/>
</dbReference>
<dbReference type="DNASU" id="84650"/>
<dbReference type="Ensembl" id="ENST00000242827.11">
    <molecule id="Q9BY08-1"/>
    <property type="protein sequence ID" value="ENSP00000242827.6"/>
    <property type="gene ID" value="ENSG00000123179.14"/>
</dbReference>
<dbReference type="Ensembl" id="ENST00000378268.1">
    <molecule id="Q9BY08-2"/>
    <property type="protein sequence ID" value="ENSP00000367516.1"/>
    <property type="gene ID" value="ENSG00000123179.14"/>
</dbReference>
<dbReference type="Ensembl" id="ENST00000378270.5">
    <molecule id="Q9BY08-3"/>
    <property type="protein sequence ID" value="ENSP00000367519.5"/>
    <property type="gene ID" value="ENSG00000123179.14"/>
</dbReference>
<dbReference type="Ensembl" id="ENST00000378272.9">
    <molecule id="Q9BY08-4"/>
    <property type="protein sequence ID" value="ENSP00000367521.5"/>
    <property type="gene ID" value="ENSG00000123179.14"/>
</dbReference>
<dbReference type="GeneID" id="84650"/>
<dbReference type="KEGG" id="hsa:84650"/>
<dbReference type="MANE-Select" id="ENST00000242827.11">
    <property type="protein sequence ID" value="ENSP00000242827.6"/>
    <property type="RefSeq nucleotide sequence ID" value="NM_032565.5"/>
    <property type="RefSeq protein sequence ID" value="NP_115954.1"/>
</dbReference>
<dbReference type="UCSC" id="uc001vdg.5">
    <molecule id="Q9BY08-1"/>
    <property type="organism name" value="human"/>
</dbReference>
<dbReference type="AGR" id="HGNC:18061"/>
<dbReference type="CTD" id="84650"/>
<dbReference type="DisGeNET" id="84650"/>
<dbReference type="GeneCards" id="EBPL"/>
<dbReference type="HGNC" id="HGNC:18061">
    <property type="gene designation" value="EBPL"/>
</dbReference>
<dbReference type="HPA" id="ENSG00000123179">
    <property type="expression patterns" value="Tissue enhanced (liver)"/>
</dbReference>
<dbReference type="MIM" id="617335">
    <property type="type" value="gene"/>
</dbReference>
<dbReference type="neXtProt" id="NX_Q9BY08"/>
<dbReference type="OpenTargets" id="ENSG00000123179"/>
<dbReference type="PharmGKB" id="PA134875632"/>
<dbReference type="VEuPathDB" id="HostDB:ENSG00000123179"/>
<dbReference type="eggNOG" id="KOG4826">
    <property type="taxonomic scope" value="Eukaryota"/>
</dbReference>
<dbReference type="GeneTree" id="ENSGT00530000063715"/>
<dbReference type="HOGENOM" id="CLU_2346090_0_0_1"/>
<dbReference type="InParanoid" id="Q9BY08"/>
<dbReference type="OMA" id="VYLWLYL"/>
<dbReference type="OrthoDB" id="58557at2759"/>
<dbReference type="PAN-GO" id="Q9BY08">
    <property type="GO annotations" value="1 GO annotation based on evolutionary models"/>
</dbReference>
<dbReference type="PhylomeDB" id="Q9BY08"/>
<dbReference type="TreeFam" id="TF314716"/>
<dbReference type="PathwayCommons" id="Q9BY08"/>
<dbReference type="SignaLink" id="Q9BY08"/>
<dbReference type="BioGRID-ORCS" id="84650">
    <property type="hits" value="30 hits in 1155 CRISPR screens"/>
</dbReference>
<dbReference type="ChiTaRS" id="EBPL">
    <property type="organism name" value="human"/>
</dbReference>
<dbReference type="GenomeRNAi" id="84650"/>
<dbReference type="Pharos" id="Q9BY08">
    <property type="development level" value="Tchem"/>
</dbReference>
<dbReference type="PRO" id="PR:Q9BY08"/>
<dbReference type="Proteomes" id="UP000005640">
    <property type="component" value="Chromosome 13"/>
</dbReference>
<dbReference type="RNAct" id="Q9BY08">
    <property type="molecule type" value="protein"/>
</dbReference>
<dbReference type="Bgee" id="ENSG00000123179">
    <property type="expression patterns" value="Expressed in right lobe of liver and 100 other cell types or tissues"/>
</dbReference>
<dbReference type="ExpressionAtlas" id="Q9BY08">
    <property type="expression patterns" value="baseline and differential"/>
</dbReference>
<dbReference type="GO" id="GO:0005783">
    <property type="term" value="C:endoplasmic reticulum"/>
    <property type="evidence" value="ECO:0000314"/>
    <property type="project" value="HPA"/>
</dbReference>
<dbReference type="GO" id="GO:0005789">
    <property type="term" value="C:endoplasmic reticulum membrane"/>
    <property type="evidence" value="ECO:0007669"/>
    <property type="project" value="UniProtKB-SubCell"/>
</dbReference>
<dbReference type="GO" id="GO:0047750">
    <property type="term" value="F:cholestenol delta-isomerase activity"/>
    <property type="evidence" value="ECO:0007669"/>
    <property type="project" value="InterPro"/>
</dbReference>
<dbReference type="GO" id="GO:0016125">
    <property type="term" value="P:sterol metabolic process"/>
    <property type="evidence" value="ECO:0007669"/>
    <property type="project" value="InterPro"/>
</dbReference>
<dbReference type="InterPro" id="IPR007905">
    <property type="entry name" value="EBP"/>
</dbReference>
<dbReference type="InterPro" id="IPR033118">
    <property type="entry name" value="EXPERA"/>
</dbReference>
<dbReference type="PANTHER" id="PTHR14207:SF4">
    <property type="entry name" value="EMOPAMIL-BINDING PROTEIN-LIKE"/>
    <property type="match status" value="1"/>
</dbReference>
<dbReference type="PANTHER" id="PTHR14207">
    <property type="entry name" value="STEROL ISOMERASE"/>
    <property type="match status" value="1"/>
</dbReference>
<dbReference type="Pfam" id="PF05241">
    <property type="entry name" value="EBP"/>
    <property type="match status" value="1"/>
</dbReference>
<dbReference type="PROSITE" id="PS51751">
    <property type="entry name" value="EXPERA"/>
    <property type="match status" value="1"/>
</dbReference>
<proteinExistence type="evidence at protein level"/>
<accession>Q9BY08</accession>
<accession>A6NJ59</accession>
<accession>Q569H7</accession>
<accession>Q5JVN2</accession>
<accession>Q5JVN3</accession>
<accession>Q5JVN4</accession>
<accession>Q5JVN5</accession>
<accession>Q5JVN6</accession>